<evidence type="ECO:0000255" key="1">
    <source>
        <dbReference type="HAMAP-Rule" id="MF_00023"/>
    </source>
</evidence>
<evidence type="ECO:0000256" key="2">
    <source>
        <dbReference type="SAM" id="MobiDB-lite"/>
    </source>
</evidence>
<dbReference type="EMBL" id="CP000744">
    <property type="protein sequence ID" value="ABR85291.1"/>
    <property type="molecule type" value="Genomic_DNA"/>
</dbReference>
<dbReference type="RefSeq" id="WP_003100496.1">
    <property type="nucleotide sequence ID" value="NC_009656.1"/>
</dbReference>
<dbReference type="SMR" id="A6VCM5"/>
<dbReference type="GeneID" id="77223305"/>
<dbReference type="KEGG" id="pap:PSPA7_5488"/>
<dbReference type="HOGENOM" id="CLU_108953_3_0_6"/>
<dbReference type="Proteomes" id="UP000001582">
    <property type="component" value="Chromosome"/>
</dbReference>
<dbReference type="GO" id="GO:0005829">
    <property type="term" value="C:cytosol"/>
    <property type="evidence" value="ECO:0007669"/>
    <property type="project" value="TreeGrafter"/>
</dbReference>
<dbReference type="GO" id="GO:0003723">
    <property type="term" value="F:RNA binding"/>
    <property type="evidence" value="ECO:0007669"/>
    <property type="project" value="UniProtKB-UniRule"/>
</dbReference>
<dbReference type="GO" id="GO:0070929">
    <property type="term" value="P:trans-translation"/>
    <property type="evidence" value="ECO:0007669"/>
    <property type="project" value="UniProtKB-UniRule"/>
</dbReference>
<dbReference type="CDD" id="cd09294">
    <property type="entry name" value="SmpB"/>
    <property type="match status" value="1"/>
</dbReference>
<dbReference type="Gene3D" id="2.40.280.10">
    <property type="match status" value="1"/>
</dbReference>
<dbReference type="HAMAP" id="MF_00023">
    <property type="entry name" value="SmpB"/>
    <property type="match status" value="1"/>
</dbReference>
<dbReference type="InterPro" id="IPR023620">
    <property type="entry name" value="SmpB"/>
</dbReference>
<dbReference type="InterPro" id="IPR000037">
    <property type="entry name" value="SsrA-bd_prot"/>
</dbReference>
<dbReference type="InterPro" id="IPR020081">
    <property type="entry name" value="SsrA-bd_prot_CS"/>
</dbReference>
<dbReference type="NCBIfam" id="NF003843">
    <property type="entry name" value="PRK05422.1"/>
    <property type="match status" value="1"/>
</dbReference>
<dbReference type="NCBIfam" id="TIGR00086">
    <property type="entry name" value="smpB"/>
    <property type="match status" value="1"/>
</dbReference>
<dbReference type="PANTHER" id="PTHR30308:SF2">
    <property type="entry name" value="SSRA-BINDING PROTEIN"/>
    <property type="match status" value="1"/>
</dbReference>
<dbReference type="PANTHER" id="PTHR30308">
    <property type="entry name" value="TMRNA-BINDING COMPONENT OF TRANS-TRANSLATION TAGGING COMPLEX"/>
    <property type="match status" value="1"/>
</dbReference>
<dbReference type="Pfam" id="PF01668">
    <property type="entry name" value="SmpB"/>
    <property type="match status" value="1"/>
</dbReference>
<dbReference type="SUPFAM" id="SSF74982">
    <property type="entry name" value="Small protein B (SmpB)"/>
    <property type="match status" value="1"/>
</dbReference>
<dbReference type="PROSITE" id="PS01317">
    <property type="entry name" value="SSRP"/>
    <property type="match status" value="1"/>
</dbReference>
<feature type="chain" id="PRO_1000002109" description="SsrA-binding protein">
    <location>
        <begin position="1"/>
        <end position="159"/>
    </location>
</feature>
<feature type="region of interest" description="Disordered" evidence="2">
    <location>
        <begin position="132"/>
        <end position="159"/>
    </location>
</feature>
<sequence>MAKQKKHPSGTIAQNKKALHDYFIEQRFEAGVALAGWEVKSLRAGKAQLVDSYVLLKDGEAWLLGSHITPLTTASTHVIADPVRTRKLLLHKRELGKLFGAVQQKGYACVALSMYWKKHLVKCEIALAKGKKDFDKRHTEKERDSDREIQRAMRHGKDD</sequence>
<proteinExistence type="inferred from homology"/>
<gene>
    <name evidence="1" type="primary">smpB</name>
    <name type="ordered locus">PSPA7_5488</name>
</gene>
<keyword id="KW-0963">Cytoplasm</keyword>
<keyword id="KW-0694">RNA-binding</keyword>
<organism>
    <name type="scientific">Pseudomonas paraeruginosa (strain DSM 24068 / PA7)</name>
    <name type="common">Pseudomonas aeruginosa (strain PA7)</name>
    <dbReference type="NCBI Taxonomy" id="381754"/>
    <lineage>
        <taxon>Bacteria</taxon>
        <taxon>Pseudomonadati</taxon>
        <taxon>Pseudomonadota</taxon>
        <taxon>Gammaproteobacteria</taxon>
        <taxon>Pseudomonadales</taxon>
        <taxon>Pseudomonadaceae</taxon>
        <taxon>Pseudomonas</taxon>
        <taxon>Pseudomonas paraeruginosa</taxon>
    </lineage>
</organism>
<name>SSRP_PSEP7</name>
<protein>
    <recommendedName>
        <fullName evidence="1">SsrA-binding protein</fullName>
    </recommendedName>
    <alternativeName>
        <fullName evidence="1">Small protein B</fullName>
    </alternativeName>
</protein>
<accession>A6VCM5</accession>
<reference key="1">
    <citation type="submission" date="2007-06" db="EMBL/GenBank/DDBJ databases">
        <authorList>
            <person name="Dodson R.J."/>
            <person name="Harkins D."/>
            <person name="Paulsen I.T."/>
        </authorList>
    </citation>
    <scope>NUCLEOTIDE SEQUENCE [LARGE SCALE GENOMIC DNA]</scope>
    <source>
        <strain>DSM 24068 / PA7</strain>
    </source>
</reference>
<comment type="function">
    <text evidence="1">Required for rescue of stalled ribosomes mediated by trans-translation. Binds to transfer-messenger RNA (tmRNA), required for stable association of tmRNA with ribosomes. tmRNA and SmpB together mimic tRNA shape, replacing the anticodon stem-loop with SmpB. tmRNA is encoded by the ssrA gene; the 2 termini fold to resemble tRNA(Ala) and it encodes a 'tag peptide', a short internal open reading frame. During trans-translation Ala-aminoacylated tmRNA acts like a tRNA, entering the A-site of stalled ribosomes, displacing the stalled mRNA. The ribosome then switches to translate the ORF on the tmRNA; the nascent peptide is terminated with the 'tag peptide' encoded by the tmRNA and targeted for degradation. The ribosome is freed to recommence translation, which seems to be the essential function of trans-translation.</text>
</comment>
<comment type="subcellular location">
    <subcellularLocation>
        <location evidence="1">Cytoplasm</location>
    </subcellularLocation>
    <text evidence="1">The tmRNA-SmpB complex associates with stalled 70S ribosomes.</text>
</comment>
<comment type="similarity">
    <text evidence="1">Belongs to the SmpB family.</text>
</comment>